<accession>Q8MVB6</accession>
<organism evidence="18">
    <name type="scientific">Ixodes scapularis</name>
    <name type="common">Black-legged tick</name>
    <name type="synonym">Deer tick</name>
    <dbReference type="NCBI Taxonomy" id="6945"/>
    <lineage>
        <taxon>Eukaryota</taxon>
        <taxon>Metazoa</taxon>
        <taxon>Ecdysozoa</taxon>
        <taxon>Arthropoda</taxon>
        <taxon>Chelicerata</taxon>
        <taxon>Arachnida</taxon>
        <taxon>Acari</taxon>
        <taxon>Parasitiformes</taxon>
        <taxon>Ixodida</taxon>
        <taxon>Ixodoidea</taxon>
        <taxon>Ixodidae</taxon>
        <taxon>Ixodinae</taxon>
        <taxon>Ixodes</taxon>
    </lineage>
</organism>
<proteinExistence type="evidence at protein level"/>
<feature type="signal peptide" evidence="2">
    <location>
        <begin position="1"/>
        <end position="19"/>
    </location>
</feature>
<feature type="chain" id="PRO_5005401154" description="Salivary cystatin-L" evidence="3">
    <location>
        <begin position="20"/>
        <end position="133"/>
    </location>
</feature>
<feature type="domain" description="Cystatin" evidence="2">
    <location>
        <begin position="30"/>
        <end position="118"/>
    </location>
</feature>
<feature type="site" description="Reactive site" evidence="1">
    <location>
        <position position="24"/>
    </location>
</feature>
<feature type="disulfide bond" evidence="7 19">
    <location>
        <begin position="89"/>
        <end position="100"/>
    </location>
</feature>
<feature type="disulfide bond" evidence="7 19">
    <location>
        <begin position="111"/>
        <end position="130"/>
    </location>
</feature>
<feature type="helix" evidence="20">
    <location>
        <begin position="36"/>
        <end position="51"/>
    </location>
</feature>
<feature type="strand" evidence="20">
    <location>
        <begin position="58"/>
        <end position="90"/>
    </location>
</feature>
<feature type="turn" evidence="20">
    <location>
        <begin position="97"/>
        <end position="99"/>
    </location>
</feature>
<feature type="strand" evidence="20">
    <location>
        <begin position="109"/>
        <end position="118"/>
    </location>
</feature>
<feature type="strand" evidence="20">
    <location>
        <begin position="123"/>
        <end position="125"/>
    </location>
</feature>
<comment type="function">
    <text evidence="4 5 6 7 8 9 10 11">Contributes to the suppression of the host's immune response to tick salivary proteins and is important for successful feeding on hosts (PubMed:17698852). Inhibitor of cysteine proteinases (PubMed:16772304, PubMed:17698852, PubMed:20545851, PubMed:38444844). Inhibits host papain and cathepsin L (CTSL) (in vitro) (PubMed:16772304, PubMed:17698852, PubMed:20545851, PubMed:38444844). Inhibits host cathepsin S (CTSS) (in vitro) (PubMed:17698852, PubMed:20545851, PubMed:38444844). Inhibits host CTSV and CTSC, but to a lesser degree (in vitro) (PubMed:16772304, PubMed:17698852). Inhibits host immune responses via its inhibition of host cathepsins (PubMed:19494265). Inhibits differentiation of host dendritic cells (PubMed:19494265, PubMed:25975355). Inhibits proliferation of host T-cells in response to antigen stimulus (PubMed:19494265). Down-regulates IL1B production by host mast cells, and this then leads to impaired activation of IL1R1, resulting in decreased IL9 production (PubMed:26078269). Inhibits host inflammatory reactions and recruitment of host neutrophils (PubMed:16772304). Attenuates IFN-beta (IFNB1)-triggered JAK/STAT signaling pathway in mouse dendritic cells (PubMed:25408129).</text>
</comment>
<comment type="function">
    <text evidence="9">(Microbial infection) Down-regulates TLR2-mediated host responses to infection by Borrelia burgdorferi and the production of the chemokine CCL3 by host dendritic cells (PubMed:25975355). Down-regulates host responses to infection by B.burgdorferi and the production of IFNB1 by host dendritic cells (PubMed:25975355).</text>
</comment>
<comment type="subunit">
    <text evidence="7">Monomer. Can form homodimers in vitro, but probably not in vivo. Homodimers are predicted to be inactive; dimerization disrupts the interaction with target proteases.</text>
</comment>
<comment type="subcellular location">
    <subcellularLocation>
        <location evidence="4">Secreted</location>
    </subcellularLocation>
</comment>
<comment type="tissue specificity">
    <text evidence="4 5">Detected in saliva (at protein level) (PubMed:16772304). Detected in salivary gland and midgut (PubMed:17698852).</text>
</comment>
<comment type="disruption phenotype">
    <text evidence="5">Combined, RNAi-mediated down-regulation of salivary cystatin-L and salivary cystatin-L2 in salivary glands strongly impairs the tick's ability to feed on hosts. About 40% of the ticks cannot feed and die. The remainder show much reduced blood intake, appear unhealthy and display strongly reduced egg laying. RNAi-treated ticks show an impaired ability to suppress the host's immune response to tick salivary proteins.</text>
</comment>
<comment type="miscellaneous">
    <text evidence="11">Decreases symptoms in mouse model of mannan-induced psoriasis-like inflammation by modulating immune responses.</text>
</comment>
<comment type="similarity">
    <text evidence="17">Belongs to the cystatin family.</text>
</comment>
<sequence length="133" mass="14282">MTSTFALVLLLGGMAVCVATGVFGGYSERANHQANPEFLNLAHYATSTWSAQQPGKTHFDTVAEVVKVETQVVAGTNYRLTLKVAESTCELTSTYNKDTCLPKADAAHRTCTTVVFENLQGDKSVSPFECEAA</sequence>
<name>CYTL_IXOSC</name>
<evidence type="ECO:0000250" key="1">
    <source>
        <dbReference type="UniProtKB" id="P01040"/>
    </source>
</evidence>
<evidence type="ECO:0000255" key="2"/>
<evidence type="ECO:0000255" key="3">
    <source>
        <dbReference type="RuleBase" id="RU362130"/>
    </source>
</evidence>
<evidence type="ECO:0000269" key="4">
    <source>
    </source>
</evidence>
<evidence type="ECO:0000269" key="5">
    <source>
    </source>
</evidence>
<evidence type="ECO:0000269" key="6">
    <source>
    </source>
</evidence>
<evidence type="ECO:0000269" key="7">
    <source>
    </source>
</evidence>
<evidence type="ECO:0000269" key="8">
    <source>
    </source>
</evidence>
<evidence type="ECO:0000269" key="9">
    <source>
    </source>
</evidence>
<evidence type="ECO:0000269" key="10">
    <source>
    </source>
</evidence>
<evidence type="ECO:0000269" key="11">
    <source>
    </source>
</evidence>
<evidence type="ECO:0000303" key="12">
    <source>
    </source>
</evidence>
<evidence type="ECO:0000303" key="13">
    <source>
    </source>
</evidence>
<evidence type="ECO:0000303" key="14">
    <source>
    </source>
</evidence>
<evidence type="ECO:0000303" key="15">
    <source>
    </source>
</evidence>
<evidence type="ECO:0000303" key="16">
    <source>
    </source>
</evidence>
<evidence type="ECO:0000305" key="17"/>
<evidence type="ECO:0000312" key="18">
    <source>
        <dbReference type="EMBL" id="AAM93646.1"/>
    </source>
</evidence>
<evidence type="ECO:0007744" key="19">
    <source>
        <dbReference type="PDB" id="4ZM8"/>
    </source>
</evidence>
<evidence type="ECO:0007829" key="20">
    <source>
        <dbReference type="PDB" id="4ZM8"/>
    </source>
</evidence>
<dbReference type="EMBL" id="AF483724">
    <property type="protein sequence ID" value="AAM93646.1"/>
    <property type="molecule type" value="mRNA"/>
</dbReference>
<dbReference type="PDB" id="4ZM8">
    <property type="method" value="X-ray"/>
    <property type="resolution" value="2.68 A"/>
    <property type="chains" value="A/B/C/D=20-133"/>
</dbReference>
<dbReference type="PDBsum" id="4ZM8"/>
<dbReference type="SMR" id="Q8MVB6"/>
<dbReference type="MEROPS" id="I25.049"/>
<dbReference type="VEuPathDB" id="VectorBase:ISCI018603"/>
<dbReference type="VEuPathDB" id="VectorBase:ISCP_026933"/>
<dbReference type="VEuPathDB" id="VectorBase:ISCW018603"/>
<dbReference type="HOGENOM" id="CLU_1898537_0_0_1"/>
<dbReference type="InParanoid" id="Q8MVB6"/>
<dbReference type="OrthoDB" id="1908104at2759"/>
<dbReference type="EvolutionaryTrace" id="Q8MVB6"/>
<dbReference type="Proteomes" id="UP000001555">
    <property type="component" value="Unplaced"/>
</dbReference>
<dbReference type="GO" id="GO:0005576">
    <property type="term" value="C:extracellular region"/>
    <property type="evidence" value="ECO:0007669"/>
    <property type="project" value="UniProtKB-SubCell"/>
</dbReference>
<dbReference type="GO" id="GO:0004869">
    <property type="term" value="F:cysteine-type endopeptidase inhibitor activity"/>
    <property type="evidence" value="ECO:0007669"/>
    <property type="project" value="UniProtKB-KW"/>
</dbReference>
<dbReference type="CDD" id="cd00042">
    <property type="entry name" value="CY"/>
    <property type="match status" value="1"/>
</dbReference>
<dbReference type="FunFam" id="3.10.450.10:FF:000042">
    <property type="entry name" value="Salivary cystatin-L"/>
    <property type="match status" value="1"/>
</dbReference>
<dbReference type="Gene3D" id="3.10.450.10">
    <property type="match status" value="1"/>
</dbReference>
<dbReference type="InterPro" id="IPR000010">
    <property type="entry name" value="Cystatin_dom"/>
</dbReference>
<dbReference type="InterPro" id="IPR046350">
    <property type="entry name" value="Cystatin_sf"/>
</dbReference>
<dbReference type="InterPro" id="IPR018073">
    <property type="entry name" value="Prot_inh_cystat_CS"/>
</dbReference>
<dbReference type="PANTHER" id="PTHR46186">
    <property type="entry name" value="CYSTATIN"/>
    <property type="match status" value="1"/>
</dbReference>
<dbReference type="PANTHER" id="PTHR46186:SF2">
    <property type="entry name" value="CYSTATIN"/>
    <property type="match status" value="1"/>
</dbReference>
<dbReference type="Pfam" id="PF00031">
    <property type="entry name" value="Cystatin"/>
    <property type="match status" value="1"/>
</dbReference>
<dbReference type="SMART" id="SM00043">
    <property type="entry name" value="CY"/>
    <property type="match status" value="1"/>
</dbReference>
<dbReference type="SUPFAM" id="SSF54403">
    <property type="entry name" value="Cystatin/monellin"/>
    <property type="match status" value="1"/>
</dbReference>
<dbReference type="PROSITE" id="PS00287">
    <property type="entry name" value="CYSTATIN"/>
    <property type="match status" value="1"/>
</dbReference>
<reference key="1">
    <citation type="journal article" date="2002" name="J. Exp. Biol.">
        <title>Exploring the sialome of the tick Ixodes scapularis.</title>
        <authorList>
            <person name="Valenzuela J.G."/>
            <person name="Francischetti I.M."/>
            <person name="Pham V.M."/>
            <person name="Garfield M.K."/>
            <person name="Mather T.N."/>
            <person name="Ribeiro J.M."/>
        </authorList>
    </citation>
    <scope>NUCLEOTIDE SEQUENCE [MRNA]</scope>
    <source>
        <strain evidence="18">Rhode Island</strain>
        <tissue evidence="18">Salivary gland</tissue>
    </source>
</reference>
<reference key="2">
    <citation type="journal article" date="2006" name="J. Biol. Chem.">
        <title>Antiinflammatory and immunosuppressive activity of sialostatin L, a salivary cystatin from the tick Ixodes scapularis.</title>
        <authorList>
            <person name="Kotsyfakis M."/>
            <person name="Sa-Nunes A."/>
            <person name="Francischetti I.M."/>
            <person name="Mather T.N."/>
            <person name="Andersen J.F."/>
            <person name="Ribeiro J.M."/>
        </authorList>
    </citation>
    <scope>FUNCTION</scope>
    <scope>SUBCELLULAR LOCATION</scope>
    <scope>TISSUE SPECIFICITY</scope>
</reference>
<reference key="3">
    <citation type="journal article" date="2007" name="J. Biol. Chem.">
        <title>Selective cysteine protease inhibition contributes to blood-feeding success of the tick Ixodes scapularis.</title>
        <authorList>
            <person name="Kotsyfakis M."/>
            <person name="Karim S."/>
            <person name="Andersen J.F."/>
            <person name="Mather T.N."/>
            <person name="Ribeiro J.M."/>
        </authorList>
    </citation>
    <scope>FUNCTION</scope>
    <scope>DISRUPTION PHENOTYPE</scope>
    <scope>TISSUE SPECIFICITY</scope>
</reference>
<reference key="4">
    <citation type="journal article" date="2009" name="J. Immunol.">
        <title>The immunomodulatory action of sialostatin L on dendritic cells reveals its potential to interfere with autoimmunity.</title>
        <authorList>
            <person name="Sa-Nunes A."/>
            <person name="Bafica A."/>
            <person name="Antonelli L.R."/>
            <person name="Choi E.Y."/>
            <person name="Francischetti I.M."/>
            <person name="Andersen J.F."/>
            <person name="Shi G.P."/>
            <person name="Chavakis T."/>
            <person name="Ribeiro J.M."/>
            <person name="Kotsyfakis M."/>
        </authorList>
    </citation>
    <scope>FUNCTION</scope>
</reference>
<reference key="5">
    <citation type="journal article" date="2015" name="J. Immunol.">
        <title>Tick salivary sialostatin L represses the initiation of immune responses by targeting IRF4-dependent transcription in murine mast cells.</title>
        <authorList>
            <person name="Klein M."/>
            <person name="Bruehl T.J."/>
            <person name="Staudt V."/>
            <person name="Reuter S."/>
            <person name="Grebe N."/>
            <person name="Gerlitzki B."/>
            <person name="Hoffmann M."/>
            <person name="Bohn T."/>
            <person name="Ulges A."/>
            <person name="Stergiou N."/>
            <person name="de Graaf J."/>
            <person name="Loewer M."/>
            <person name="Taube C."/>
            <person name="Becker M."/>
            <person name="Hain T."/>
            <person name="Dietzen S."/>
            <person name="Stassen M."/>
            <person name="Huber M."/>
            <person name="Lohoff M."/>
            <person name="Campos Chagas A."/>
            <person name="Andersen J."/>
            <person name="Kotal J."/>
            <person name="Langhansova H."/>
            <person name="Kopecky J."/>
            <person name="Schild H."/>
            <person name="Kotsyfakis M."/>
            <person name="Schmitt E."/>
            <person name="Bopp T."/>
        </authorList>
    </citation>
    <scope>FUNCTION</scope>
</reference>
<reference key="6">
    <citation type="journal article" date="2015" name="Parasite Immunol.">
        <title>Tick salivary cystatin sialostatin L2 suppresses IFN responses in mouse dendritic cells.</title>
        <authorList>
            <person name="Lieskovska J."/>
            <person name="Palenikova J."/>
            <person name="Sirmarova J."/>
            <person name="Elsterova J."/>
            <person name="Kotsyfakis M."/>
            <person name="Campos Chagas A."/>
            <person name="Calvo E."/>
            <person name="Ruzek D."/>
            <person name="Kopecky J."/>
        </authorList>
    </citation>
    <scope>FUNCTION</scope>
</reference>
<reference key="7">
    <citation type="journal article" date="2015" name="Parasit. Vectors">
        <title>Tick sialostatins L and L2 differentially influence dendritic cell responses to Borrelia spirochetes.</title>
        <authorList>
            <person name="Lieskovska J."/>
            <person name="Palenikova J."/>
            <person name="Langhansova H."/>
            <person name="Campos Chagas A."/>
            <person name="Calvo E."/>
            <person name="Kotsyfakis M."/>
            <person name="Kopecky J."/>
        </authorList>
    </citation>
    <scope>FUNCTION</scope>
    <scope>FUNCTION (MICROBIAL INFECTION)</scope>
</reference>
<reference evidence="17" key="8">
    <citation type="journal article" date="2024" name="Front. Immunol.">
        <title>Tick cysteine protease inhibitors suppress immune responses in mannan-induced psoriasis-like inflammation.</title>
        <authorList>
            <person name="Wu H."/>
            <person name="Jmel M.A."/>
            <person name="Chai J."/>
            <person name="Tian M."/>
            <person name="Xu X."/>
            <person name="Hui Y."/>
            <person name="Nandakumar K.S."/>
            <person name="Kotsyfakis M."/>
        </authorList>
    </citation>
    <scope>FUNCTION</scope>
</reference>
<reference evidence="19" key="9">
    <citation type="journal article" date="2010" name="Mol. Microbiol.">
        <title>The crystal structures of two salivary cystatins from the tick Ixodes scapularis and the effect of these inhibitors on the establishment of Borrelia burgdorferi infection in a murine model.</title>
        <authorList>
            <person name="Kotsyfakis M."/>
            <person name="Horka H."/>
            <person name="Salat J."/>
            <person name="Andersen J.F."/>
        </authorList>
    </citation>
    <scope>X-RAY CRYSTALLOGRAPHY (2.67 ANGSTROMS) OF 20-133</scope>
    <scope>FUNCTION</scope>
    <scope>SUBUNIT</scope>
    <scope>DISULFIDE BONDS</scope>
</reference>
<protein>
    <recommendedName>
        <fullName evidence="17">Salivary cystatin-L</fullName>
    </recommendedName>
    <alternativeName>
        <fullName evidence="12 14 15 16">Sialostatin-L</fullName>
        <shortName evidence="13 15">SialoL</shortName>
    </alternativeName>
</protein>
<keyword id="KW-0002">3D-structure</keyword>
<keyword id="KW-1015">Disulfide bond</keyword>
<keyword id="KW-0646">Protease inhibitor</keyword>
<keyword id="KW-1185">Reference proteome</keyword>
<keyword id="KW-0964">Secreted</keyword>
<keyword id="KW-0732">Signal</keyword>
<keyword id="KW-0789">Thiol protease inhibitor</keyword>